<organism evidence="12">
    <name type="scientific">Klebsiella pneumoniae</name>
    <dbReference type="NCBI Taxonomy" id="573"/>
    <lineage>
        <taxon>Bacteria</taxon>
        <taxon>Pseudomonadati</taxon>
        <taxon>Pseudomonadota</taxon>
        <taxon>Gammaproteobacteria</taxon>
        <taxon>Enterobacterales</taxon>
        <taxon>Enterobacteriaceae</taxon>
        <taxon>Klebsiella/Raoultella group</taxon>
        <taxon>Klebsiella</taxon>
        <taxon>Klebsiella pneumoniae complex</taxon>
    </lineage>
</organism>
<feature type="signal peptide" evidence="2">
    <location>
        <begin position="1"/>
        <end position="23"/>
    </location>
</feature>
<feature type="chain" id="PRO_5004161193" description="Beta-lactamase CMY-1" evidence="2">
    <location>
        <begin position="24"/>
        <end position="382"/>
    </location>
</feature>
<feature type="active site" description="Acyl-ester intermediate" evidence="1">
    <location>
        <position position="88"/>
    </location>
</feature>
<feature type="binding site" evidence="1">
    <location>
        <position position="88"/>
    </location>
    <ligand>
        <name>a beta-lactam</name>
        <dbReference type="ChEBI" id="CHEBI:35627"/>
    </ligand>
</feature>
<feature type="binding site" evidence="1">
    <location>
        <position position="144"/>
    </location>
    <ligand>
        <name>a beta-lactam</name>
        <dbReference type="ChEBI" id="CHEBI:35627"/>
    </ligand>
</feature>
<feature type="binding site" evidence="1">
    <location>
        <position position="174"/>
    </location>
    <ligand>
        <name>a beta-lactam</name>
        <dbReference type="ChEBI" id="CHEBI:35627"/>
    </ligand>
</feature>
<feature type="binding site" evidence="1">
    <location>
        <position position="176"/>
    </location>
    <ligand>
        <name>a beta-lactam</name>
        <dbReference type="ChEBI" id="CHEBI:35627"/>
    </ligand>
</feature>
<feature type="binding site" evidence="1">
    <location>
        <position position="363"/>
    </location>
    <ligand>
        <name>a beta-lactam</name>
        <dbReference type="ChEBI" id="CHEBI:35627"/>
    </ligand>
</feature>
<gene>
    <name evidence="12" type="primary">blaCMY-1</name>
    <name evidence="6 7" type="synonym">CMY-1</name>
</gene>
<comment type="function">
    <text evidence="4 5">Class C beta-lactamase which confers resistance to penicillins and cephalosporins (PubMed:8843306). Has benzylpenicillin- and cefalotin-hydrolyzing activities (PubMed:16189104). Has weak cefuroxime, cefotaxime, cefoxitin, imipenem and oxacillin-hydrolyzing activities (PubMed:16189104).</text>
</comment>
<comment type="catalytic activity">
    <reaction evidence="3 4">
        <text>a beta-lactam + H2O = a substituted beta-amino acid</text>
        <dbReference type="Rhea" id="RHEA:20401"/>
        <dbReference type="ChEBI" id="CHEBI:15377"/>
        <dbReference type="ChEBI" id="CHEBI:35627"/>
        <dbReference type="ChEBI" id="CHEBI:140347"/>
        <dbReference type="EC" id="3.5.2.6"/>
    </reaction>
</comment>
<comment type="activity regulation">
    <text evidence="5">Inhibited by the beta-lactamase-blocking agent sulbactam.</text>
</comment>
<comment type="biophysicochemical properties">
    <kinetics>
        <KM evidence="4">1 uM for benzylpenicillin (at pH 7.0 and 30 degrees Celsius)</KM>
        <KM evidence="4">2.2 uM for ampicillin (at pH 7.0 and 30 degrees Celsius)</KM>
        <KM evidence="4">230 uM for nitrocefin (at pH 7.0 and 30 degrees Celsius)</KM>
        <KM evidence="4">110 uM for cephaloridine (at pH 7.0 and 30 degrees Celsius)</KM>
        <KM evidence="4">54 uM for cefazolin (at pH 7.0 and 30 degrees Celsius)</KM>
        <KM evidence="4">30 uM for cefalotin (at pH 7.0 and 30 degrees Celsius)</KM>
        <KM evidence="4">14 uM for cephalexin (at pH 7.0 and 30 degrees Celsius)</KM>
        <KM evidence="4">0.055 uM for cefoxitin (at pH 7.0 and 30 degrees Celsius)</KM>
        <KM evidence="4">0.005 uM for cefuroxime (at pH 7.0 and 30 degrees Celsius)</KM>
        <KM evidence="4">0.015 uM for cefotaxime (at pH 7.0 and 30 degrees Celsius)</KM>
        <KM evidence="4">0.002 uM for imipenem (at pH 7.0 and 30 degrees Celsius)</KM>
        <KM evidence="4">0.009 uM for oxacillin (at pH 7.0 and 30 degrees Celsius)</KM>
        <text evidence="4">kcat is 13 sec(-1) with benzylpenicillin as substrate (at pH 7.0 and 30 degrees Celsius) (PubMed:16189104). kcat is 0.45 sec(-1) with ampicillin as substrate (at pH 7.0 and 30 degrees Celsius) (PubMed:16189104). kcat is 2220 sec(-1) with nitrocefin as substrate (at pH 7.0 and 30 degrees Celsius) (PubMed:16189104). kcat is 155 sec(-1) with cephaloridine as substrate (at pH 7.0 and 30 degrees Celsius) (PubMed:16189104). kcat is 325 sec(-1) with cefazolin as substrate (at pH 7.0 and 30 degrees Celsius) (PubMed:16189104). kcat is 480 sec(-1) with cefalotin as substrate (at pH 7.0 and 30 degrees Celsius) (PubMed:16189104). kcat is 115 sec(-1) with cephalexin as substrate (at pH 7.0 and 30 degrees Celsius) (PubMed:16189104). kcat is 0.05 sec(-1) with cefoxitin as substrate (at pH 7.0 and 30 degrees Celsius) (PubMed:16189104). kcat is 0.02 sec(-1) with cefuroxime as substrate (at pH 7.0 and 30 degrees Celsius) (PubMed:16189104). kcat is 0.01 sec(-1) with cefotaxime as substrate (at pH 7.0 and 30 degrees Celsius) (PubMed:16189104). kcat is 0.05 sec(-1) with imipenem as substrate (at pH 7.0 and 30 degrees Celsius) (PubMed:16189104). kcat is 0.02 sec(-1) with oxacillin as substrate (at pH 7.0 and 30 degrees Celsius) (PubMed:16189104).</text>
    </kinetics>
</comment>
<comment type="induction">
    <text evidence="6">May confer resistance to poorer substrates by high level expression.</text>
</comment>
<comment type="miscellaneous">
    <text evidence="6 9 11">Described as a cephamycinase, but cephamycin substrates such as cefoxitin are chemically very similar to cephalosporins, and sometimes classified as a type of cephalosporin (Probable). Cefoxitin is a poor substrate, hydrolyzed only weakly in vitro (Probable). Nevertheless, CMY-1 may confer resistance to poorer substrates by high level expression (PubMed:16189104).</text>
</comment>
<comment type="miscellaneous">
    <text evidence="10">The class C beta-lactamase family has a specific amino-acid numbering system known as SANC, for structural alignment-based numbering of class C beta-lactamases, or else the simpler name structural position. A multiple sequence alignment was used to derive a consensus sequence and then the consensus was numbered taking into account insertions and deletions. This allows use of identical numbers, e.g. for active site residues, despite differences in protein length. UniProt always uses natural numbering of residues, hence there appear to be differences in numbering between this entry and some papers.</text>
</comment>
<comment type="similarity">
    <text evidence="3 8">Belongs to the class-C beta-lactamase family.</text>
</comment>
<proteinExistence type="evidence at protein level"/>
<protein>
    <recommendedName>
        <fullName evidence="7">Beta-lactamase CMY-1</fullName>
        <ecNumber evidence="3 4">3.5.2.6</ecNumber>
    </recommendedName>
    <alternativeName>
        <fullName evidence="6">cephamycinase blaCMY-1</fullName>
    </alternativeName>
</protein>
<accession>P71420</accession>
<geneLocation type="plasmid" evidence="12">
    <name>pMVP-1</name>
</geneLocation>
<name>BLCY1_KLEPN</name>
<keyword id="KW-0046">Antibiotic resistance</keyword>
<keyword id="KW-0378">Hydrolase</keyword>
<keyword id="KW-0614">Plasmid</keyword>
<keyword id="KW-0732">Signal</keyword>
<sequence>MQQRQSILWGAVATLMWAGLAHAGEASPVDPLRPVVDASIQPLLKEHRIPGMAVAVLKDGKAHYFNYGVANRESGAGVSEQTLFEIGSVSKTLTATLGAYAVVKGAMQLDDKASRHAPWLKGSAFDSITMGELATYSAGGLPLQFPEEVDSSEKMRAYYRQWAPVYSPGSHRQYSNPSIGLFGHLAASSLKQPFAPLMEQTLLPGLGMHHTYVNVPKQAMASYAYGYSKEDKPIRVNPGMLADEAYGIKTSSADLLRFVKANIGGVDDKALQQAISLTHQGHYSVGGMTQGLGWESYAYPVTEQTLLAGNSAKVILEANPTAAPRESGSQVLFNKTGSTNGFGAYVAFVPARGIGIVMLANRNYPNEARIKAAHAILAQLAG</sequence>
<evidence type="ECO:0000250" key="1">
    <source>
        <dbReference type="UniProtKB" id="P00811"/>
    </source>
</evidence>
<evidence type="ECO:0000255" key="2"/>
<evidence type="ECO:0000255" key="3">
    <source>
        <dbReference type="RuleBase" id="RU361140"/>
    </source>
</evidence>
<evidence type="ECO:0000269" key="4">
    <source>
    </source>
</evidence>
<evidence type="ECO:0000269" key="5">
    <source>
    </source>
</evidence>
<evidence type="ECO:0000303" key="6">
    <source>
    </source>
</evidence>
<evidence type="ECO:0000303" key="7">
    <source>
    </source>
</evidence>
<evidence type="ECO:0000305" key="8"/>
<evidence type="ECO:0000305" key="9">
    <source>
    </source>
</evidence>
<evidence type="ECO:0000305" key="10">
    <source>
    </source>
</evidence>
<evidence type="ECO:0000305" key="11">
    <source>
    </source>
</evidence>
<evidence type="ECO:0000312" key="12">
    <source>
        <dbReference type="EMBL" id="CAA63264.1"/>
    </source>
</evidence>
<dbReference type="EC" id="3.5.2.6" evidence="3 4"/>
<dbReference type="EMBL" id="X92508">
    <property type="protein sequence ID" value="CAA63264.1"/>
    <property type="molecule type" value="Genomic_DNA"/>
</dbReference>
<dbReference type="RefSeq" id="WP_032488864.1">
    <property type="nucleotide sequence ID" value="NG_048768.1"/>
</dbReference>
<dbReference type="SMR" id="P71420"/>
<dbReference type="CARD" id="ARO:3002012">
    <property type="molecule name" value="CMY-1"/>
    <property type="mechanism identifier" value="ARO:0001004"/>
    <property type="mechanism name" value="antibiotic inactivation"/>
</dbReference>
<dbReference type="MEROPS" id="S12.006"/>
<dbReference type="KEGG" id="ag:CAA63264"/>
<dbReference type="GO" id="GO:0030288">
    <property type="term" value="C:outer membrane-bounded periplasmic space"/>
    <property type="evidence" value="ECO:0007669"/>
    <property type="project" value="InterPro"/>
</dbReference>
<dbReference type="GO" id="GO:0008800">
    <property type="term" value="F:beta-lactamase activity"/>
    <property type="evidence" value="ECO:0007669"/>
    <property type="project" value="UniProtKB-EC"/>
</dbReference>
<dbReference type="GO" id="GO:0017001">
    <property type="term" value="P:antibiotic catabolic process"/>
    <property type="evidence" value="ECO:0007669"/>
    <property type="project" value="InterPro"/>
</dbReference>
<dbReference type="GO" id="GO:0046677">
    <property type="term" value="P:response to antibiotic"/>
    <property type="evidence" value="ECO:0007669"/>
    <property type="project" value="UniProtKB-KW"/>
</dbReference>
<dbReference type="Gene3D" id="3.40.710.10">
    <property type="entry name" value="DD-peptidase/beta-lactamase superfamily"/>
    <property type="match status" value="1"/>
</dbReference>
<dbReference type="InterPro" id="IPR050491">
    <property type="entry name" value="Bact_CellWall_Synth/Modif"/>
</dbReference>
<dbReference type="InterPro" id="IPR001466">
    <property type="entry name" value="Beta-lactam-related"/>
</dbReference>
<dbReference type="InterPro" id="IPR012338">
    <property type="entry name" value="Beta-lactam/transpept-like"/>
</dbReference>
<dbReference type="InterPro" id="IPR001586">
    <property type="entry name" value="Beta-lactam_class-C_AS"/>
</dbReference>
<dbReference type="NCBIfam" id="NF033085">
    <property type="entry name" value="bla_class_C"/>
    <property type="match status" value="1"/>
</dbReference>
<dbReference type="NCBIfam" id="NF012172">
    <property type="entry name" value="FOX-MOX"/>
    <property type="match status" value="1"/>
</dbReference>
<dbReference type="NCBIfam" id="NF000239">
    <property type="entry name" value="MOX_CMY1_fam"/>
    <property type="match status" value="1"/>
</dbReference>
<dbReference type="PANTHER" id="PTHR46825:SF8">
    <property type="entry name" value="BETA-LACTAMASE-RELATED"/>
    <property type="match status" value="1"/>
</dbReference>
<dbReference type="PANTHER" id="PTHR46825">
    <property type="entry name" value="D-ALANYL-D-ALANINE-CARBOXYPEPTIDASE/ENDOPEPTIDASE AMPH"/>
    <property type="match status" value="1"/>
</dbReference>
<dbReference type="Pfam" id="PF00144">
    <property type="entry name" value="Beta-lactamase"/>
    <property type="match status" value="1"/>
</dbReference>
<dbReference type="SUPFAM" id="SSF56601">
    <property type="entry name" value="beta-lactamase/transpeptidase-like"/>
    <property type="match status" value="1"/>
</dbReference>
<dbReference type="PROSITE" id="PS00336">
    <property type="entry name" value="BETA_LACTAMASE_C"/>
    <property type="match status" value="1"/>
</dbReference>
<reference evidence="12" key="1">
    <citation type="journal article" date="1996" name="Antimicrob. Agents Chemother.">
        <title>Comparative characterization of the cephamycinase blaCMY-1 gene and its relationship with other beta-lactamase genes.</title>
        <authorList>
            <person name="Bauernfeind A."/>
            <person name="Stemplinger I."/>
            <person name="Chong Y."/>
        </authorList>
    </citation>
    <scope>NUCLEOTIDE SEQUENCE [GENOMIC DNA]</scope>
    <scope>FUNCTION</scope>
    <scope>ACTIVITY REGULATION</scope>
    <source>
        <strain evidence="12">CHO</strain>
        <plasmid evidence="12">pMVP-1</plasmid>
    </source>
</reference>
<reference evidence="8" key="2">
    <citation type="journal article" date="2005" name="Antimicrob. Agents Chemother.">
        <title>Kinetic properties of four plasmid-mediated AmpC beta-lactamases.</title>
        <authorList>
            <person name="Bauvois C."/>
            <person name="Ibuka A.S."/>
            <person name="Celso A."/>
            <person name="Alba J."/>
            <person name="Ishii Y."/>
            <person name="Frere J.M."/>
            <person name="Galleni M."/>
        </authorList>
    </citation>
    <scope>FUNCTION</scope>
    <scope>CATALYTIC ACTIVITY</scope>
    <scope>BIOPHYSICOCHEMICAL PROPERTIES</scope>
    <scope>INDUCTION</scope>
</reference>
<reference key="3">
    <citation type="journal article" date="2020" name="Antimicrob. Agents Chemother.">
        <title>A Standard Numbering Scheme for Class C beta-Lactamases.</title>
        <authorList>
            <person name="Mack A.R."/>
            <person name="Barnes M.D."/>
            <person name="Taracila M.A."/>
            <person name="Hujer A.M."/>
            <person name="Hujer K.M."/>
            <person name="Cabot G."/>
            <person name="Feldgarden M."/>
            <person name="Haft D.H."/>
            <person name="Klimke W."/>
            <person name="van den Akker F."/>
            <person name="Vila A.J."/>
            <person name="Smania A."/>
            <person name="Haider S."/>
            <person name="Papp-Wallace K.M."/>
            <person name="Bradford P.A."/>
            <person name="Rossolini G.M."/>
            <person name="Docquier J.D."/>
            <person name="Frere J.M."/>
            <person name="Galleni M."/>
            <person name="Hanson N.D."/>
            <person name="Oliver A."/>
            <person name="Plesiat P."/>
            <person name="Poirel L."/>
            <person name="Nordmann P."/>
            <person name="Palzkill T.G."/>
            <person name="Jacoby G.A."/>
            <person name="Bush K."/>
            <person name="Bonomo R.A."/>
        </authorList>
    </citation>
    <scope>AMINO ACID NUMBERING SCHEME</scope>
</reference>